<comment type="function">
    <text evidence="1">Involved in peptide bond synthesis. Alleviates ribosome stalling that occurs when 3 or more consecutive Pro residues or the sequence PPG is present in a protein, possibly by augmenting the peptidyl transferase activity of the ribosome. Modification of Lys-34 is required for alleviation.</text>
</comment>
<comment type="pathway">
    <text evidence="1">Protein biosynthesis; polypeptide chain elongation.</text>
</comment>
<comment type="subcellular location">
    <subcellularLocation>
        <location evidence="1">Cytoplasm</location>
    </subcellularLocation>
</comment>
<comment type="PTM">
    <text evidence="1">May be beta-lysylated on the epsilon-amino group of Lys-34 by the combined action of EpmA and EpmB, and then hydroxylated on the C5 position of the same residue by EpmC (if this protein is present). Lysylation is critical for the stimulatory effect of EF-P on peptide-bond formation. The lysylation moiety may extend toward the peptidyltransferase center and stabilize the terminal 3-CCA end of the tRNA. Hydroxylation of the C5 position on Lys-34 may allow additional potential stabilizing hydrogen-bond interactions with the P-tRNA.</text>
</comment>
<comment type="similarity">
    <text evidence="1">Belongs to the elongation factor P family.</text>
</comment>
<protein>
    <recommendedName>
        <fullName evidence="1">Elongation factor P</fullName>
        <shortName evidence="1">EF-P</shortName>
    </recommendedName>
</protein>
<sequence>MATVSTNEFKGGLKLMIDSEPCVILENEYVKPGKGQAFNRVKIRKLLSGKVLEKTFKSGDTCEVADVMDIDLDYLYSDGEFYHFMNNETFEQIAADAKAVGENVKWLVENNTCMLTLWNGNPIAVTPPNFVELEVIETDPGLKGDTQGTGGKPATLSTGAVVRVPLFIQIGEVIKVDTRSSEYVGRVK</sequence>
<keyword id="KW-0963">Cytoplasm</keyword>
<keyword id="KW-0251">Elongation factor</keyword>
<keyword id="KW-0379">Hydroxylation</keyword>
<keyword id="KW-0648">Protein biosynthesis</keyword>
<organism>
    <name type="scientific">Vibrio vulnificus (strain YJ016)</name>
    <dbReference type="NCBI Taxonomy" id="196600"/>
    <lineage>
        <taxon>Bacteria</taxon>
        <taxon>Pseudomonadati</taxon>
        <taxon>Pseudomonadota</taxon>
        <taxon>Gammaproteobacteria</taxon>
        <taxon>Vibrionales</taxon>
        <taxon>Vibrionaceae</taxon>
        <taxon>Vibrio</taxon>
    </lineage>
</organism>
<name>EFP_VIBVY</name>
<dbReference type="EMBL" id="BA000037">
    <property type="protein sequence ID" value="BAC95866.1"/>
    <property type="molecule type" value="Genomic_DNA"/>
</dbReference>
<dbReference type="RefSeq" id="WP_011079249.1">
    <property type="nucleotide sequence ID" value="NC_005139.1"/>
</dbReference>
<dbReference type="SMR" id="Q7MGX2"/>
<dbReference type="STRING" id="672.VV93_v1c28250"/>
<dbReference type="KEGG" id="vvy:VV3102"/>
<dbReference type="eggNOG" id="COG0231">
    <property type="taxonomic scope" value="Bacteria"/>
</dbReference>
<dbReference type="HOGENOM" id="CLU_074944_0_0_6"/>
<dbReference type="UniPathway" id="UPA00345"/>
<dbReference type="Proteomes" id="UP000002675">
    <property type="component" value="Chromosome I"/>
</dbReference>
<dbReference type="GO" id="GO:0005737">
    <property type="term" value="C:cytoplasm"/>
    <property type="evidence" value="ECO:0007669"/>
    <property type="project" value="UniProtKB-SubCell"/>
</dbReference>
<dbReference type="GO" id="GO:0003746">
    <property type="term" value="F:translation elongation factor activity"/>
    <property type="evidence" value="ECO:0007669"/>
    <property type="project" value="UniProtKB-UniRule"/>
</dbReference>
<dbReference type="GO" id="GO:0043043">
    <property type="term" value="P:peptide biosynthetic process"/>
    <property type="evidence" value="ECO:0007669"/>
    <property type="project" value="InterPro"/>
</dbReference>
<dbReference type="CDD" id="cd04470">
    <property type="entry name" value="S1_EF-P_repeat_1"/>
    <property type="match status" value="1"/>
</dbReference>
<dbReference type="CDD" id="cd05794">
    <property type="entry name" value="S1_EF-P_repeat_2"/>
    <property type="match status" value="1"/>
</dbReference>
<dbReference type="FunFam" id="2.30.30.30:FF:000003">
    <property type="entry name" value="Elongation factor P"/>
    <property type="match status" value="1"/>
</dbReference>
<dbReference type="FunFam" id="2.40.50.140:FF:000004">
    <property type="entry name" value="Elongation factor P"/>
    <property type="match status" value="1"/>
</dbReference>
<dbReference type="FunFam" id="2.40.50.140:FF:000009">
    <property type="entry name" value="Elongation factor P"/>
    <property type="match status" value="1"/>
</dbReference>
<dbReference type="Gene3D" id="2.30.30.30">
    <property type="match status" value="1"/>
</dbReference>
<dbReference type="Gene3D" id="2.40.50.140">
    <property type="entry name" value="Nucleic acid-binding proteins"/>
    <property type="match status" value="2"/>
</dbReference>
<dbReference type="HAMAP" id="MF_00141">
    <property type="entry name" value="EF_P"/>
    <property type="match status" value="1"/>
</dbReference>
<dbReference type="InterPro" id="IPR015365">
    <property type="entry name" value="Elong-fact-P_C"/>
</dbReference>
<dbReference type="InterPro" id="IPR012340">
    <property type="entry name" value="NA-bd_OB-fold"/>
</dbReference>
<dbReference type="InterPro" id="IPR014722">
    <property type="entry name" value="Rib_uL2_dom2"/>
</dbReference>
<dbReference type="InterPro" id="IPR020599">
    <property type="entry name" value="Transl_elong_fac_P/YeiP"/>
</dbReference>
<dbReference type="InterPro" id="IPR013185">
    <property type="entry name" value="Transl_elong_KOW-like"/>
</dbReference>
<dbReference type="InterPro" id="IPR001059">
    <property type="entry name" value="Transl_elong_P/YeiP_cen"/>
</dbReference>
<dbReference type="InterPro" id="IPR013852">
    <property type="entry name" value="Transl_elong_P/YeiP_CS"/>
</dbReference>
<dbReference type="InterPro" id="IPR011768">
    <property type="entry name" value="Transl_elongation_fac_P"/>
</dbReference>
<dbReference type="InterPro" id="IPR008991">
    <property type="entry name" value="Translation_prot_SH3-like_sf"/>
</dbReference>
<dbReference type="NCBIfam" id="TIGR00038">
    <property type="entry name" value="efp"/>
    <property type="match status" value="1"/>
</dbReference>
<dbReference type="NCBIfam" id="NF001810">
    <property type="entry name" value="PRK00529.1"/>
    <property type="match status" value="1"/>
</dbReference>
<dbReference type="PANTHER" id="PTHR30053">
    <property type="entry name" value="ELONGATION FACTOR P"/>
    <property type="match status" value="1"/>
</dbReference>
<dbReference type="PANTHER" id="PTHR30053:SF12">
    <property type="entry name" value="ELONGATION FACTOR P (EF-P) FAMILY PROTEIN"/>
    <property type="match status" value="1"/>
</dbReference>
<dbReference type="Pfam" id="PF01132">
    <property type="entry name" value="EFP"/>
    <property type="match status" value="1"/>
</dbReference>
<dbReference type="Pfam" id="PF08207">
    <property type="entry name" value="EFP_N"/>
    <property type="match status" value="1"/>
</dbReference>
<dbReference type="Pfam" id="PF09285">
    <property type="entry name" value="Elong-fact-P_C"/>
    <property type="match status" value="1"/>
</dbReference>
<dbReference type="PIRSF" id="PIRSF005901">
    <property type="entry name" value="EF-P"/>
    <property type="match status" value="1"/>
</dbReference>
<dbReference type="SMART" id="SM01185">
    <property type="entry name" value="EFP"/>
    <property type="match status" value="1"/>
</dbReference>
<dbReference type="SMART" id="SM00841">
    <property type="entry name" value="Elong-fact-P_C"/>
    <property type="match status" value="1"/>
</dbReference>
<dbReference type="SUPFAM" id="SSF50249">
    <property type="entry name" value="Nucleic acid-binding proteins"/>
    <property type="match status" value="2"/>
</dbReference>
<dbReference type="SUPFAM" id="SSF50104">
    <property type="entry name" value="Translation proteins SH3-like domain"/>
    <property type="match status" value="1"/>
</dbReference>
<dbReference type="PROSITE" id="PS01275">
    <property type="entry name" value="EFP"/>
    <property type="match status" value="1"/>
</dbReference>
<evidence type="ECO:0000255" key="1">
    <source>
        <dbReference type="HAMAP-Rule" id="MF_00141"/>
    </source>
</evidence>
<accession>Q7MGX2</accession>
<proteinExistence type="inferred from homology"/>
<reference key="1">
    <citation type="journal article" date="2003" name="Genome Res.">
        <title>Comparative genome analysis of Vibrio vulnificus, a marine pathogen.</title>
        <authorList>
            <person name="Chen C.-Y."/>
            <person name="Wu K.-M."/>
            <person name="Chang Y.-C."/>
            <person name="Chang C.-H."/>
            <person name="Tsai H.-C."/>
            <person name="Liao T.-L."/>
            <person name="Liu Y.-M."/>
            <person name="Chen H.-J."/>
            <person name="Shen A.B.-T."/>
            <person name="Li J.-C."/>
            <person name="Su T.-L."/>
            <person name="Shao C.-P."/>
            <person name="Lee C.-T."/>
            <person name="Hor L.-I."/>
            <person name="Tsai S.-F."/>
        </authorList>
    </citation>
    <scope>NUCLEOTIDE SEQUENCE [LARGE SCALE GENOMIC DNA]</scope>
    <source>
        <strain>YJ016</strain>
    </source>
</reference>
<gene>
    <name evidence="1" type="primary">efp</name>
    <name type="ordered locus">VV3102</name>
</gene>
<feature type="chain" id="PRO_0000094368" description="Elongation factor P">
    <location>
        <begin position="1"/>
        <end position="188"/>
    </location>
</feature>
<feature type="modified residue" description="N6-(3,6-diaminohexanoyl)-5-hydroxylysine" evidence="1">
    <location>
        <position position="34"/>
    </location>
</feature>